<feature type="chain" id="PRO_0000095771" description="Translation initiation factor IF-1">
    <location>
        <begin position="1"/>
        <end position="73"/>
    </location>
</feature>
<feature type="domain" description="S1-like" evidence="1">
    <location>
        <begin position="1"/>
        <end position="73"/>
    </location>
</feature>
<dbReference type="EMBL" id="AE001273">
    <property type="protein sequence ID" value="AAC67916.1"/>
    <property type="molecule type" value="Genomic_DNA"/>
</dbReference>
<dbReference type="PIR" id="H71528">
    <property type="entry name" value="H71528"/>
</dbReference>
<dbReference type="RefSeq" id="NP_219828.1">
    <property type="nucleotide sequence ID" value="NC_000117.1"/>
</dbReference>
<dbReference type="RefSeq" id="WP_009871670.1">
    <property type="nucleotide sequence ID" value="NC_000117.1"/>
</dbReference>
<dbReference type="SMR" id="P65106"/>
<dbReference type="FunCoup" id="P65106">
    <property type="interactions" value="182"/>
</dbReference>
<dbReference type="STRING" id="272561.CT_323"/>
<dbReference type="EnsemblBacteria" id="AAC67916">
    <property type="protein sequence ID" value="AAC67916"/>
    <property type="gene ID" value="CT_323"/>
</dbReference>
<dbReference type="GeneID" id="884795"/>
<dbReference type="GeneID" id="93065146"/>
<dbReference type="KEGG" id="ctr:CT_323"/>
<dbReference type="PATRIC" id="fig|272561.5.peg.345"/>
<dbReference type="HOGENOM" id="CLU_151267_1_0_0"/>
<dbReference type="InParanoid" id="P65106"/>
<dbReference type="OrthoDB" id="9803250at2"/>
<dbReference type="PRO" id="PR:P65106"/>
<dbReference type="Proteomes" id="UP000000431">
    <property type="component" value="Chromosome"/>
</dbReference>
<dbReference type="GO" id="GO:0005829">
    <property type="term" value="C:cytosol"/>
    <property type="evidence" value="ECO:0000318"/>
    <property type="project" value="GO_Central"/>
</dbReference>
<dbReference type="GO" id="GO:0043022">
    <property type="term" value="F:ribosome binding"/>
    <property type="evidence" value="ECO:0000318"/>
    <property type="project" value="GO_Central"/>
</dbReference>
<dbReference type="GO" id="GO:0019843">
    <property type="term" value="F:rRNA binding"/>
    <property type="evidence" value="ECO:0007669"/>
    <property type="project" value="UniProtKB-UniRule"/>
</dbReference>
<dbReference type="GO" id="GO:0003743">
    <property type="term" value="F:translation initiation factor activity"/>
    <property type="evidence" value="ECO:0007669"/>
    <property type="project" value="UniProtKB-UniRule"/>
</dbReference>
<dbReference type="CDD" id="cd04451">
    <property type="entry name" value="S1_IF1"/>
    <property type="match status" value="1"/>
</dbReference>
<dbReference type="FunFam" id="2.40.50.140:FF:000002">
    <property type="entry name" value="Translation initiation factor IF-1"/>
    <property type="match status" value="1"/>
</dbReference>
<dbReference type="Gene3D" id="2.40.50.140">
    <property type="entry name" value="Nucleic acid-binding proteins"/>
    <property type="match status" value="1"/>
</dbReference>
<dbReference type="HAMAP" id="MF_00075">
    <property type="entry name" value="IF_1"/>
    <property type="match status" value="1"/>
</dbReference>
<dbReference type="InterPro" id="IPR012340">
    <property type="entry name" value="NA-bd_OB-fold"/>
</dbReference>
<dbReference type="InterPro" id="IPR006196">
    <property type="entry name" value="RNA-binding_domain_S1_IF1"/>
</dbReference>
<dbReference type="InterPro" id="IPR003029">
    <property type="entry name" value="S1_domain"/>
</dbReference>
<dbReference type="InterPro" id="IPR004368">
    <property type="entry name" value="TIF_IF1"/>
</dbReference>
<dbReference type="NCBIfam" id="TIGR00008">
    <property type="entry name" value="infA"/>
    <property type="match status" value="1"/>
</dbReference>
<dbReference type="PANTHER" id="PTHR33370">
    <property type="entry name" value="TRANSLATION INITIATION FACTOR IF-1, CHLOROPLASTIC"/>
    <property type="match status" value="1"/>
</dbReference>
<dbReference type="PANTHER" id="PTHR33370:SF1">
    <property type="entry name" value="TRANSLATION INITIATION FACTOR IF-1, CHLOROPLASTIC"/>
    <property type="match status" value="1"/>
</dbReference>
<dbReference type="Pfam" id="PF01176">
    <property type="entry name" value="eIF-1a"/>
    <property type="match status" value="1"/>
</dbReference>
<dbReference type="SMART" id="SM00316">
    <property type="entry name" value="S1"/>
    <property type="match status" value="1"/>
</dbReference>
<dbReference type="SUPFAM" id="SSF50249">
    <property type="entry name" value="Nucleic acid-binding proteins"/>
    <property type="match status" value="1"/>
</dbReference>
<dbReference type="PROSITE" id="PS50832">
    <property type="entry name" value="S1_IF1_TYPE"/>
    <property type="match status" value="1"/>
</dbReference>
<accession>P65106</accession>
<accession>O84325</accession>
<comment type="function">
    <text evidence="1">One of the essential components for the initiation of protein synthesis. Stabilizes the binding of IF-2 and IF-3 on the 30S subunit to which N-formylmethionyl-tRNA(fMet) subsequently binds. Helps modulate mRNA selection, yielding the 30S pre-initiation complex (PIC). Upon addition of the 50S ribosomal subunit IF-1, IF-2 and IF-3 are released leaving the mature 70S translation initiation complex.</text>
</comment>
<comment type="subunit">
    <text evidence="1">Component of the 30S ribosomal translation pre-initiation complex which assembles on the 30S ribosome in the order IF-2 and IF-3, IF-1 and N-formylmethionyl-tRNA(fMet); mRNA recruitment can occur at any time during PIC assembly.</text>
</comment>
<comment type="subcellular location">
    <subcellularLocation>
        <location evidence="1">Cytoplasm</location>
    </subcellularLocation>
</comment>
<comment type="similarity">
    <text evidence="1">Belongs to the IF-1 family.</text>
</comment>
<sequence length="73" mass="8413">MAKKEDTIVLEGRVEELLPGMHFRVMLENGVPITAHLCGKMRMSNIRLLVGDRVTVEMSTYDLTKARVVYRHR</sequence>
<evidence type="ECO:0000255" key="1">
    <source>
        <dbReference type="HAMAP-Rule" id="MF_00075"/>
    </source>
</evidence>
<gene>
    <name evidence="1" type="primary">infA</name>
    <name type="ordered locus">CT_323</name>
</gene>
<proteinExistence type="inferred from homology"/>
<reference key="1">
    <citation type="journal article" date="1998" name="Science">
        <title>Genome sequence of an obligate intracellular pathogen of humans: Chlamydia trachomatis.</title>
        <authorList>
            <person name="Stephens R.S."/>
            <person name="Kalman S."/>
            <person name="Lammel C.J."/>
            <person name="Fan J."/>
            <person name="Marathe R."/>
            <person name="Aravind L."/>
            <person name="Mitchell W.P."/>
            <person name="Olinger L."/>
            <person name="Tatusov R.L."/>
            <person name="Zhao Q."/>
            <person name="Koonin E.V."/>
            <person name="Davis R.W."/>
        </authorList>
    </citation>
    <scope>NUCLEOTIDE SEQUENCE [LARGE SCALE GENOMIC DNA]</scope>
    <source>
        <strain>ATCC VR-885 / DSM 19411 / UW-3/Cx</strain>
    </source>
</reference>
<organism>
    <name type="scientific">Chlamydia trachomatis serovar D (strain ATCC VR-885 / DSM 19411 / UW-3/Cx)</name>
    <dbReference type="NCBI Taxonomy" id="272561"/>
    <lineage>
        <taxon>Bacteria</taxon>
        <taxon>Pseudomonadati</taxon>
        <taxon>Chlamydiota</taxon>
        <taxon>Chlamydiia</taxon>
        <taxon>Chlamydiales</taxon>
        <taxon>Chlamydiaceae</taxon>
        <taxon>Chlamydia/Chlamydophila group</taxon>
        <taxon>Chlamydia</taxon>
    </lineage>
</organism>
<protein>
    <recommendedName>
        <fullName evidence="1">Translation initiation factor IF-1</fullName>
    </recommendedName>
</protein>
<keyword id="KW-0963">Cytoplasm</keyword>
<keyword id="KW-0396">Initiation factor</keyword>
<keyword id="KW-0648">Protein biosynthesis</keyword>
<keyword id="KW-1185">Reference proteome</keyword>
<keyword id="KW-0694">RNA-binding</keyword>
<keyword id="KW-0699">rRNA-binding</keyword>
<name>IF1_CHLTR</name>